<accession>B6JEC6</accession>
<accession>F8BUG1</accession>
<sequence>MAKRATRARPGRGRFITFEGGEGSGKSTQIQLLAERLKGQGIETLVTREPGGSPGAEIVRHLLLSGVGKLLGADAETLLFAAARDDHVHQVIEPALKKGVWVLCDRFTDSTAAYQGAAGKVDAAFIEALTHATIGDLEPDLTLILDVPVAVGLHRAIKRRGKAVADRFEQESLSFHESLRDAYRKIAADNPKRCAVVDANADAATVSERIWETMQHRLASALPARARA</sequence>
<feature type="chain" id="PRO_1000097415" description="Thymidylate kinase">
    <location>
        <begin position="1"/>
        <end position="228"/>
    </location>
</feature>
<feature type="binding site" evidence="1">
    <location>
        <begin position="20"/>
        <end position="27"/>
    </location>
    <ligand>
        <name>ATP</name>
        <dbReference type="ChEBI" id="CHEBI:30616"/>
    </ligand>
</feature>
<dbReference type="EC" id="2.7.4.9" evidence="1"/>
<dbReference type="EMBL" id="CP001196">
    <property type="protein sequence ID" value="ACI93242.1"/>
    <property type="molecule type" value="Genomic_DNA"/>
</dbReference>
<dbReference type="EMBL" id="CP002826">
    <property type="protein sequence ID" value="AEI06614.1"/>
    <property type="molecule type" value="Genomic_DNA"/>
</dbReference>
<dbReference type="RefSeq" id="WP_012563269.1">
    <property type="nucleotide sequence ID" value="NC_015684.1"/>
</dbReference>
<dbReference type="SMR" id="B6JEC6"/>
<dbReference type="STRING" id="504832.OCA5_c19020"/>
<dbReference type="KEGG" id="oca:OCAR_6127"/>
<dbReference type="KEGG" id="ocg:OCA5_c19020"/>
<dbReference type="PATRIC" id="fig|504832.7.peg.2025"/>
<dbReference type="eggNOG" id="COG0125">
    <property type="taxonomic scope" value="Bacteria"/>
</dbReference>
<dbReference type="HOGENOM" id="CLU_049131_0_0_5"/>
<dbReference type="OrthoDB" id="9774907at2"/>
<dbReference type="Proteomes" id="UP000007730">
    <property type="component" value="Chromosome"/>
</dbReference>
<dbReference type="GO" id="GO:0005829">
    <property type="term" value="C:cytosol"/>
    <property type="evidence" value="ECO:0007669"/>
    <property type="project" value="TreeGrafter"/>
</dbReference>
<dbReference type="GO" id="GO:0005524">
    <property type="term" value="F:ATP binding"/>
    <property type="evidence" value="ECO:0007669"/>
    <property type="project" value="UniProtKB-UniRule"/>
</dbReference>
<dbReference type="GO" id="GO:0004798">
    <property type="term" value="F:dTMP kinase activity"/>
    <property type="evidence" value="ECO:0007669"/>
    <property type="project" value="UniProtKB-UniRule"/>
</dbReference>
<dbReference type="GO" id="GO:0006233">
    <property type="term" value="P:dTDP biosynthetic process"/>
    <property type="evidence" value="ECO:0007669"/>
    <property type="project" value="InterPro"/>
</dbReference>
<dbReference type="GO" id="GO:0006235">
    <property type="term" value="P:dTTP biosynthetic process"/>
    <property type="evidence" value="ECO:0007669"/>
    <property type="project" value="UniProtKB-UniRule"/>
</dbReference>
<dbReference type="GO" id="GO:0006227">
    <property type="term" value="P:dUDP biosynthetic process"/>
    <property type="evidence" value="ECO:0007669"/>
    <property type="project" value="TreeGrafter"/>
</dbReference>
<dbReference type="CDD" id="cd01672">
    <property type="entry name" value="TMPK"/>
    <property type="match status" value="1"/>
</dbReference>
<dbReference type="FunFam" id="3.40.50.300:FF:000225">
    <property type="entry name" value="Thymidylate kinase"/>
    <property type="match status" value="1"/>
</dbReference>
<dbReference type="Gene3D" id="3.40.50.300">
    <property type="entry name" value="P-loop containing nucleotide triphosphate hydrolases"/>
    <property type="match status" value="1"/>
</dbReference>
<dbReference type="HAMAP" id="MF_00165">
    <property type="entry name" value="Thymidylate_kinase"/>
    <property type="match status" value="1"/>
</dbReference>
<dbReference type="InterPro" id="IPR027417">
    <property type="entry name" value="P-loop_NTPase"/>
</dbReference>
<dbReference type="InterPro" id="IPR039430">
    <property type="entry name" value="Thymidylate_kin-like_dom"/>
</dbReference>
<dbReference type="InterPro" id="IPR018095">
    <property type="entry name" value="Thymidylate_kin_CS"/>
</dbReference>
<dbReference type="InterPro" id="IPR018094">
    <property type="entry name" value="Thymidylate_kinase"/>
</dbReference>
<dbReference type="NCBIfam" id="TIGR00041">
    <property type="entry name" value="DTMP_kinase"/>
    <property type="match status" value="1"/>
</dbReference>
<dbReference type="PANTHER" id="PTHR10344">
    <property type="entry name" value="THYMIDYLATE KINASE"/>
    <property type="match status" value="1"/>
</dbReference>
<dbReference type="PANTHER" id="PTHR10344:SF4">
    <property type="entry name" value="UMP-CMP KINASE 2, MITOCHONDRIAL"/>
    <property type="match status" value="1"/>
</dbReference>
<dbReference type="Pfam" id="PF02223">
    <property type="entry name" value="Thymidylate_kin"/>
    <property type="match status" value="1"/>
</dbReference>
<dbReference type="SUPFAM" id="SSF52540">
    <property type="entry name" value="P-loop containing nucleoside triphosphate hydrolases"/>
    <property type="match status" value="1"/>
</dbReference>
<dbReference type="PROSITE" id="PS01331">
    <property type="entry name" value="THYMIDYLATE_KINASE"/>
    <property type="match status" value="1"/>
</dbReference>
<gene>
    <name evidence="1" type="primary">tmk</name>
    <name type="ordered locus">OCAR_6127</name>
    <name type="ordered locus">OCA5_c19020</name>
</gene>
<proteinExistence type="inferred from homology"/>
<evidence type="ECO:0000255" key="1">
    <source>
        <dbReference type="HAMAP-Rule" id="MF_00165"/>
    </source>
</evidence>
<protein>
    <recommendedName>
        <fullName evidence="1">Thymidylate kinase</fullName>
        <ecNumber evidence="1">2.7.4.9</ecNumber>
    </recommendedName>
    <alternativeName>
        <fullName evidence="1">dTMP kinase</fullName>
    </alternativeName>
</protein>
<keyword id="KW-0067">ATP-binding</keyword>
<keyword id="KW-0418">Kinase</keyword>
<keyword id="KW-0545">Nucleotide biosynthesis</keyword>
<keyword id="KW-0547">Nucleotide-binding</keyword>
<keyword id="KW-1185">Reference proteome</keyword>
<keyword id="KW-0808">Transferase</keyword>
<name>KTHY_AFIC5</name>
<reference key="1">
    <citation type="journal article" date="2008" name="J. Bacteriol.">
        <title>Genome sequence of the chemolithoautotrophic bacterium Oligotropha carboxidovorans OM5T.</title>
        <authorList>
            <person name="Paul D."/>
            <person name="Bridges S."/>
            <person name="Burgess S.C."/>
            <person name="Dandass Y."/>
            <person name="Lawrence M.L."/>
        </authorList>
    </citation>
    <scope>NUCLEOTIDE SEQUENCE [LARGE SCALE GENOMIC DNA]</scope>
    <source>
        <strain>ATCC 49405 / DSM 1227 / KCTC 32145 / OM5</strain>
    </source>
</reference>
<reference key="2">
    <citation type="journal article" date="2011" name="J. Bacteriol.">
        <title>Complete genome sequences of the chemolithoautotrophic Oligotropha carboxidovorans strains OM4 and OM5.</title>
        <authorList>
            <person name="Volland S."/>
            <person name="Rachinger M."/>
            <person name="Strittmatter A."/>
            <person name="Daniel R."/>
            <person name="Gottschalk G."/>
            <person name="Meyer O."/>
        </authorList>
    </citation>
    <scope>NUCLEOTIDE SEQUENCE [LARGE SCALE GENOMIC DNA]</scope>
    <source>
        <strain>ATCC 49405 / DSM 1227 / KCTC 32145 / OM5</strain>
    </source>
</reference>
<organism>
    <name type="scientific">Afipia carboxidovorans (strain ATCC 49405 / DSM 1227 / KCTC 32145 / OM5)</name>
    <name type="common">Oligotropha carboxidovorans</name>
    <dbReference type="NCBI Taxonomy" id="504832"/>
    <lineage>
        <taxon>Bacteria</taxon>
        <taxon>Pseudomonadati</taxon>
        <taxon>Pseudomonadota</taxon>
        <taxon>Alphaproteobacteria</taxon>
        <taxon>Hyphomicrobiales</taxon>
        <taxon>Nitrobacteraceae</taxon>
        <taxon>Afipia</taxon>
    </lineage>
</organism>
<comment type="function">
    <text evidence="1">Phosphorylation of dTMP to form dTDP in both de novo and salvage pathways of dTTP synthesis.</text>
</comment>
<comment type="catalytic activity">
    <reaction evidence="1">
        <text>dTMP + ATP = dTDP + ADP</text>
        <dbReference type="Rhea" id="RHEA:13517"/>
        <dbReference type="ChEBI" id="CHEBI:30616"/>
        <dbReference type="ChEBI" id="CHEBI:58369"/>
        <dbReference type="ChEBI" id="CHEBI:63528"/>
        <dbReference type="ChEBI" id="CHEBI:456216"/>
        <dbReference type="EC" id="2.7.4.9"/>
    </reaction>
</comment>
<comment type="similarity">
    <text evidence="1">Belongs to the thymidylate kinase family.</text>
</comment>